<accession>A0LIJ5</accession>
<dbReference type="EMBL" id="CP000478">
    <property type="protein sequence ID" value="ABK17247.1"/>
    <property type="molecule type" value="Genomic_DNA"/>
</dbReference>
<dbReference type="RefSeq" id="WP_011698417.1">
    <property type="nucleotide sequence ID" value="NC_008554.1"/>
</dbReference>
<dbReference type="SMR" id="A0LIJ5"/>
<dbReference type="FunCoup" id="A0LIJ5">
    <property type="interactions" value="587"/>
</dbReference>
<dbReference type="STRING" id="335543.Sfum_1560"/>
<dbReference type="KEGG" id="sfu:Sfum_1560"/>
<dbReference type="eggNOG" id="COG0091">
    <property type="taxonomic scope" value="Bacteria"/>
</dbReference>
<dbReference type="HOGENOM" id="CLU_083987_3_3_7"/>
<dbReference type="InParanoid" id="A0LIJ5"/>
<dbReference type="OrthoDB" id="9805969at2"/>
<dbReference type="Proteomes" id="UP000001784">
    <property type="component" value="Chromosome"/>
</dbReference>
<dbReference type="GO" id="GO:0022625">
    <property type="term" value="C:cytosolic large ribosomal subunit"/>
    <property type="evidence" value="ECO:0007669"/>
    <property type="project" value="TreeGrafter"/>
</dbReference>
<dbReference type="GO" id="GO:0019843">
    <property type="term" value="F:rRNA binding"/>
    <property type="evidence" value="ECO:0007669"/>
    <property type="project" value="UniProtKB-UniRule"/>
</dbReference>
<dbReference type="GO" id="GO:0003735">
    <property type="term" value="F:structural constituent of ribosome"/>
    <property type="evidence" value="ECO:0007669"/>
    <property type="project" value="InterPro"/>
</dbReference>
<dbReference type="GO" id="GO:0006412">
    <property type="term" value="P:translation"/>
    <property type="evidence" value="ECO:0007669"/>
    <property type="project" value="UniProtKB-UniRule"/>
</dbReference>
<dbReference type="CDD" id="cd00336">
    <property type="entry name" value="Ribosomal_L22"/>
    <property type="match status" value="1"/>
</dbReference>
<dbReference type="Gene3D" id="3.90.470.10">
    <property type="entry name" value="Ribosomal protein L22/L17"/>
    <property type="match status" value="1"/>
</dbReference>
<dbReference type="HAMAP" id="MF_01331_B">
    <property type="entry name" value="Ribosomal_uL22_B"/>
    <property type="match status" value="1"/>
</dbReference>
<dbReference type="InterPro" id="IPR001063">
    <property type="entry name" value="Ribosomal_uL22"/>
</dbReference>
<dbReference type="InterPro" id="IPR005727">
    <property type="entry name" value="Ribosomal_uL22_bac/chlpt-type"/>
</dbReference>
<dbReference type="InterPro" id="IPR047867">
    <property type="entry name" value="Ribosomal_uL22_bac/org-type"/>
</dbReference>
<dbReference type="InterPro" id="IPR018260">
    <property type="entry name" value="Ribosomal_uL22_CS"/>
</dbReference>
<dbReference type="InterPro" id="IPR036394">
    <property type="entry name" value="Ribosomal_uL22_sf"/>
</dbReference>
<dbReference type="NCBIfam" id="TIGR01044">
    <property type="entry name" value="rplV_bact"/>
    <property type="match status" value="1"/>
</dbReference>
<dbReference type="PANTHER" id="PTHR13501">
    <property type="entry name" value="CHLOROPLAST 50S RIBOSOMAL PROTEIN L22-RELATED"/>
    <property type="match status" value="1"/>
</dbReference>
<dbReference type="PANTHER" id="PTHR13501:SF8">
    <property type="entry name" value="LARGE RIBOSOMAL SUBUNIT PROTEIN UL22M"/>
    <property type="match status" value="1"/>
</dbReference>
<dbReference type="Pfam" id="PF00237">
    <property type="entry name" value="Ribosomal_L22"/>
    <property type="match status" value="1"/>
</dbReference>
<dbReference type="SUPFAM" id="SSF54843">
    <property type="entry name" value="Ribosomal protein L22"/>
    <property type="match status" value="1"/>
</dbReference>
<dbReference type="PROSITE" id="PS00464">
    <property type="entry name" value="RIBOSOMAL_L22"/>
    <property type="match status" value="1"/>
</dbReference>
<comment type="function">
    <text evidence="1">This protein binds specifically to 23S rRNA; its binding is stimulated by other ribosomal proteins, e.g. L4, L17, and L20. It is important during the early stages of 50S assembly. It makes multiple contacts with different domains of the 23S rRNA in the assembled 50S subunit and ribosome (By similarity).</text>
</comment>
<comment type="function">
    <text evidence="1">The globular domain of the protein is located near the polypeptide exit tunnel on the outside of the subunit, while an extended beta-hairpin is found that lines the wall of the exit tunnel in the center of the 70S ribosome.</text>
</comment>
<comment type="subunit">
    <text evidence="1">Part of the 50S ribosomal subunit.</text>
</comment>
<comment type="similarity">
    <text evidence="1">Belongs to the universal ribosomal protein uL22 family.</text>
</comment>
<feature type="chain" id="PRO_1000052671" description="Large ribosomal subunit protein uL22">
    <location>
        <begin position="1"/>
        <end position="110"/>
    </location>
</feature>
<evidence type="ECO:0000255" key="1">
    <source>
        <dbReference type="HAMAP-Rule" id="MF_01331"/>
    </source>
</evidence>
<evidence type="ECO:0000305" key="2"/>
<reference key="1">
    <citation type="submission" date="2006-10" db="EMBL/GenBank/DDBJ databases">
        <title>Complete sequence of Syntrophobacter fumaroxidans MPOB.</title>
        <authorList>
            <consortium name="US DOE Joint Genome Institute"/>
            <person name="Copeland A."/>
            <person name="Lucas S."/>
            <person name="Lapidus A."/>
            <person name="Barry K."/>
            <person name="Detter J.C."/>
            <person name="Glavina del Rio T."/>
            <person name="Hammon N."/>
            <person name="Israni S."/>
            <person name="Pitluck S."/>
            <person name="Goltsman E.G."/>
            <person name="Martinez M."/>
            <person name="Schmutz J."/>
            <person name="Larimer F."/>
            <person name="Land M."/>
            <person name="Hauser L."/>
            <person name="Kyrpides N."/>
            <person name="Kim E."/>
            <person name="Boone D.R."/>
            <person name="Brockman F."/>
            <person name="Culley D."/>
            <person name="Ferry J."/>
            <person name="Gunsalus R."/>
            <person name="McInerney M.J."/>
            <person name="Morrison M."/>
            <person name="Plugge C."/>
            <person name="Rohlin L."/>
            <person name="Scholten J."/>
            <person name="Sieber J."/>
            <person name="Stams A.J.M."/>
            <person name="Worm P."/>
            <person name="Henstra A.M."/>
            <person name="Richardson P."/>
        </authorList>
    </citation>
    <scope>NUCLEOTIDE SEQUENCE [LARGE SCALE GENOMIC DNA]</scope>
    <source>
        <strain>DSM 10017 / MPOB</strain>
    </source>
</reference>
<name>RL22_SYNFM</name>
<protein>
    <recommendedName>
        <fullName evidence="1">Large ribosomal subunit protein uL22</fullName>
    </recommendedName>
    <alternativeName>
        <fullName evidence="2">50S ribosomal protein L22</fullName>
    </alternativeName>
</protein>
<proteinExistence type="inferred from homology"/>
<gene>
    <name evidence="1" type="primary">rplV</name>
    <name type="ordered locus">Sfum_1560</name>
</gene>
<keyword id="KW-1185">Reference proteome</keyword>
<keyword id="KW-0687">Ribonucleoprotein</keyword>
<keyword id="KW-0689">Ribosomal protein</keyword>
<keyword id="KW-0694">RNA-binding</keyword>
<keyword id="KW-0699">rRNA-binding</keyword>
<organism>
    <name type="scientific">Syntrophobacter fumaroxidans (strain DSM 10017 / MPOB)</name>
    <dbReference type="NCBI Taxonomy" id="335543"/>
    <lineage>
        <taxon>Bacteria</taxon>
        <taxon>Pseudomonadati</taxon>
        <taxon>Thermodesulfobacteriota</taxon>
        <taxon>Syntrophobacteria</taxon>
        <taxon>Syntrophobacterales</taxon>
        <taxon>Syntrophobacteraceae</taxon>
        <taxon>Syntrophobacter</taxon>
    </lineage>
</organism>
<sequence length="110" mass="12331">MEVRAVSKFLRVSPHKARLVADLVRGKKVSDALTILKFTPKKSGRFINKTLRSAVANAENTKSMDVETLFVKSIFVDKGPQLKRWRPRAMGRATKILKGSSHITIILAEK</sequence>